<keyword id="KW-0004">4Fe-4S</keyword>
<keyword id="KW-0408">Iron</keyword>
<keyword id="KW-0411">Iron-sulfur</keyword>
<keyword id="KW-0456">Lyase</keyword>
<keyword id="KW-0479">Metal-binding</keyword>
<keyword id="KW-1185">Reference proteome</keyword>
<keyword id="KW-0949">S-adenosyl-L-methionine</keyword>
<keyword id="KW-0784">Thiamine biosynthesis</keyword>
<keyword id="KW-0862">Zinc</keyword>
<reference key="1">
    <citation type="journal article" date="2003" name="Nature">
        <title>Genome sequence of Bacillus cereus and comparative analysis with Bacillus anthracis.</title>
        <authorList>
            <person name="Ivanova N."/>
            <person name="Sorokin A."/>
            <person name="Anderson I."/>
            <person name="Galleron N."/>
            <person name="Candelon B."/>
            <person name="Kapatral V."/>
            <person name="Bhattacharyya A."/>
            <person name="Reznik G."/>
            <person name="Mikhailova N."/>
            <person name="Lapidus A."/>
            <person name="Chu L."/>
            <person name="Mazur M."/>
            <person name="Goltsman E."/>
            <person name="Larsen N."/>
            <person name="D'Souza M."/>
            <person name="Walunas T."/>
            <person name="Grechkin Y."/>
            <person name="Pusch G."/>
            <person name="Haselkorn R."/>
            <person name="Fonstein M."/>
            <person name="Ehrlich S.D."/>
            <person name="Overbeek R."/>
            <person name="Kyrpides N.C."/>
        </authorList>
    </citation>
    <scope>NUCLEOTIDE SEQUENCE [LARGE SCALE GENOMIC DNA]</scope>
    <source>
        <strain>ATCC 14579 / DSM 31 / CCUG 7414 / JCM 2152 / NBRC 15305 / NCIMB 9373 / NCTC 2599 / NRRL B-3711</strain>
    </source>
</reference>
<proteinExistence type="inferred from homology"/>
<gene>
    <name evidence="1" type="primary">thiC</name>
    <name type="ordered locus">BC_5227</name>
</gene>
<accession>Q815D5</accession>
<sequence length="586" mass="65728">MKQSVSAEQIELKSSLPGSKKVYVDGPREGMKVPMREIEQSETNGVPNPPIRVYDTSGPYTDPEYKVELEKGIPTPRHSWILGRGDVEAYEGREVKPEDDGVKVASKHTPVFPQMDRKPLRAKQGANVTQMHYARNGIITSEMEYVAIREGVEPEFVRKEIAEGRAILPANINHPEAEPMIIGRNFHVKVNANIGNSAVSSSIAEEVEKMTWATRWGADTIMDLSTGKNIHTTREWIIRNAPVPVGTVPIYQALEKVNGIAEDLTWEVYRDTLIEQAEQGVDYFTIHAGVLLRYIPITAKRTTGIVSRGGSIMAQWCLFHHKENFLYTHFEEICEIMKQYDVSFSLGDGLRPGSIADANDEAQFSELETLGELTKIAWKHDVQVMIEGPGHVPMHLIKENMEKELDICQGAPFYTLGPLTTDIAPGYDHITSAIGAAMIGWFGTAMLCYVTPKEHLGLPNKDDVRTGVITYKIAAHAADLAKGHKTAHQRDDALSKARFEFRWRDQFNLSLDPERAMEYHDETLPAEGAKTAHFCSMCGPKFCSMRISHDIREYAKENDLETTEAIEKGMKEKAEEFKEAGSHLYQ</sequence>
<name>THIC_BACCR</name>
<evidence type="ECO:0000255" key="1">
    <source>
        <dbReference type="HAMAP-Rule" id="MF_00089"/>
    </source>
</evidence>
<evidence type="ECO:0000256" key="2">
    <source>
        <dbReference type="SAM" id="MobiDB-lite"/>
    </source>
</evidence>
<feature type="chain" id="PRO_0000152782" description="Phosphomethylpyrimidine synthase">
    <location>
        <begin position="1"/>
        <end position="586"/>
    </location>
</feature>
<feature type="region of interest" description="Disordered" evidence="2">
    <location>
        <begin position="1"/>
        <end position="59"/>
    </location>
</feature>
<feature type="compositionally biased region" description="Basic and acidic residues" evidence="2">
    <location>
        <begin position="22"/>
        <end position="39"/>
    </location>
</feature>
<feature type="binding site" evidence="1">
    <location>
        <position position="193"/>
    </location>
    <ligand>
        <name>substrate</name>
    </ligand>
</feature>
<feature type="binding site" evidence="1">
    <location>
        <position position="222"/>
    </location>
    <ligand>
        <name>substrate</name>
    </ligand>
</feature>
<feature type="binding site" evidence="1">
    <location>
        <position position="251"/>
    </location>
    <ligand>
        <name>substrate</name>
    </ligand>
</feature>
<feature type="binding site" evidence="1">
    <location>
        <position position="287"/>
    </location>
    <ligand>
        <name>substrate</name>
    </ligand>
</feature>
<feature type="binding site" evidence="1">
    <location>
        <begin position="307"/>
        <end position="309"/>
    </location>
    <ligand>
        <name>substrate</name>
    </ligand>
</feature>
<feature type="binding site" evidence="1">
    <location>
        <begin position="348"/>
        <end position="351"/>
    </location>
    <ligand>
        <name>substrate</name>
    </ligand>
</feature>
<feature type="binding site" evidence="1">
    <location>
        <position position="387"/>
    </location>
    <ligand>
        <name>substrate</name>
    </ligand>
</feature>
<feature type="binding site" evidence="1">
    <location>
        <position position="391"/>
    </location>
    <ligand>
        <name>Zn(2+)</name>
        <dbReference type="ChEBI" id="CHEBI:29105"/>
    </ligand>
</feature>
<feature type="binding site" evidence="1">
    <location>
        <position position="414"/>
    </location>
    <ligand>
        <name>substrate</name>
    </ligand>
</feature>
<feature type="binding site" evidence="1">
    <location>
        <position position="455"/>
    </location>
    <ligand>
        <name>Zn(2+)</name>
        <dbReference type="ChEBI" id="CHEBI:29105"/>
    </ligand>
</feature>
<feature type="binding site" evidence="1">
    <location>
        <position position="535"/>
    </location>
    <ligand>
        <name>[4Fe-4S] cluster</name>
        <dbReference type="ChEBI" id="CHEBI:49883"/>
        <note>4Fe-4S-S-AdoMet</note>
    </ligand>
</feature>
<feature type="binding site" evidence="1">
    <location>
        <position position="538"/>
    </location>
    <ligand>
        <name>[4Fe-4S] cluster</name>
        <dbReference type="ChEBI" id="CHEBI:49883"/>
        <note>4Fe-4S-S-AdoMet</note>
    </ligand>
</feature>
<feature type="binding site" evidence="1">
    <location>
        <position position="543"/>
    </location>
    <ligand>
        <name>[4Fe-4S] cluster</name>
        <dbReference type="ChEBI" id="CHEBI:49883"/>
        <note>4Fe-4S-S-AdoMet</note>
    </ligand>
</feature>
<comment type="function">
    <text evidence="1">Catalyzes the synthesis of the hydroxymethylpyrimidine phosphate (HMP-P) moiety of thiamine from aminoimidazole ribotide (AIR) in a radical S-adenosyl-L-methionine (SAM)-dependent reaction.</text>
</comment>
<comment type="catalytic activity">
    <reaction evidence="1">
        <text>5-amino-1-(5-phospho-beta-D-ribosyl)imidazole + S-adenosyl-L-methionine = 4-amino-2-methyl-5-(phosphooxymethyl)pyrimidine + CO + 5'-deoxyadenosine + formate + L-methionine + 3 H(+)</text>
        <dbReference type="Rhea" id="RHEA:24840"/>
        <dbReference type="ChEBI" id="CHEBI:15378"/>
        <dbReference type="ChEBI" id="CHEBI:15740"/>
        <dbReference type="ChEBI" id="CHEBI:17245"/>
        <dbReference type="ChEBI" id="CHEBI:17319"/>
        <dbReference type="ChEBI" id="CHEBI:57844"/>
        <dbReference type="ChEBI" id="CHEBI:58354"/>
        <dbReference type="ChEBI" id="CHEBI:59789"/>
        <dbReference type="ChEBI" id="CHEBI:137981"/>
        <dbReference type="EC" id="4.1.99.17"/>
    </reaction>
</comment>
<comment type="cofactor">
    <cofactor evidence="1">
        <name>[4Fe-4S] cluster</name>
        <dbReference type="ChEBI" id="CHEBI:49883"/>
    </cofactor>
    <text evidence="1">Binds 1 [4Fe-4S] cluster per subunit. The cluster is coordinated with 3 cysteines and an exchangeable S-adenosyl-L-methionine.</text>
</comment>
<comment type="pathway">
    <text evidence="1">Cofactor biosynthesis; thiamine diphosphate biosynthesis.</text>
</comment>
<comment type="similarity">
    <text evidence="1">Belongs to the ThiC family.</text>
</comment>
<protein>
    <recommendedName>
        <fullName evidence="1">Phosphomethylpyrimidine synthase</fullName>
        <ecNumber evidence="1">4.1.99.17</ecNumber>
    </recommendedName>
    <alternativeName>
        <fullName evidence="1">Hydroxymethylpyrimidine phosphate synthase</fullName>
        <shortName evidence="1">HMP-P synthase</shortName>
        <shortName evidence="1">HMP-phosphate synthase</shortName>
        <shortName evidence="1">HMPP synthase</shortName>
    </alternativeName>
    <alternativeName>
        <fullName evidence="1">Thiamine biosynthesis protein ThiC</fullName>
    </alternativeName>
</protein>
<organism>
    <name type="scientific">Bacillus cereus (strain ATCC 14579 / DSM 31 / CCUG 7414 / JCM 2152 / NBRC 15305 / NCIMB 9373 / NCTC 2599 / NRRL B-3711)</name>
    <dbReference type="NCBI Taxonomy" id="226900"/>
    <lineage>
        <taxon>Bacteria</taxon>
        <taxon>Bacillati</taxon>
        <taxon>Bacillota</taxon>
        <taxon>Bacilli</taxon>
        <taxon>Bacillales</taxon>
        <taxon>Bacillaceae</taxon>
        <taxon>Bacillus</taxon>
        <taxon>Bacillus cereus group</taxon>
    </lineage>
</organism>
<dbReference type="EC" id="4.1.99.17" evidence="1"/>
<dbReference type="EMBL" id="AE016877">
    <property type="protein sequence ID" value="AAP12091.1"/>
    <property type="molecule type" value="Genomic_DNA"/>
</dbReference>
<dbReference type="RefSeq" id="NP_834890.1">
    <property type="nucleotide sequence ID" value="NC_004722.1"/>
</dbReference>
<dbReference type="RefSeq" id="WP_000814482.1">
    <property type="nucleotide sequence ID" value="NZ_CP138336.1"/>
</dbReference>
<dbReference type="SMR" id="Q815D5"/>
<dbReference type="STRING" id="226900.BC_5227"/>
<dbReference type="KEGG" id="bce:BC5227"/>
<dbReference type="PATRIC" id="fig|226900.8.peg.5393"/>
<dbReference type="HOGENOM" id="CLU_013181_2_1_9"/>
<dbReference type="OrthoDB" id="9805897at2"/>
<dbReference type="UniPathway" id="UPA00060"/>
<dbReference type="Proteomes" id="UP000001417">
    <property type="component" value="Chromosome"/>
</dbReference>
<dbReference type="GO" id="GO:0005829">
    <property type="term" value="C:cytosol"/>
    <property type="evidence" value="ECO:0000318"/>
    <property type="project" value="GO_Central"/>
</dbReference>
<dbReference type="GO" id="GO:0051539">
    <property type="term" value="F:4 iron, 4 sulfur cluster binding"/>
    <property type="evidence" value="ECO:0007669"/>
    <property type="project" value="UniProtKB-KW"/>
</dbReference>
<dbReference type="GO" id="GO:0016830">
    <property type="term" value="F:carbon-carbon lyase activity"/>
    <property type="evidence" value="ECO:0007669"/>
    <property type="project" value="InterPro"/>
</dbReference>
<dbReference type="GO" id="GO:0008270">
    <property type="term" value="F:zinc ion binding"/>
    <property type="evidence" value="ECO:0007669"/>
    <property type="project" value="UniProtKB-UniRule"/>
</dbReference>
<dbReference type="GO" id="GO:0009228">
    <property type="term" value="P:thiamine biosynthetic process"/>
    <property type="evidence" value="ECO:0000318"/>
    <property type="project" value="GO_Central"/>
</dbReference>
<dbReference type="GO" id="GO:0009229">
    <property type="term" value="P:thiamine diphosphate biosynthetic process"/>
    <property type="evidence" value="ECO:0007669"/>
    <property type="project" value="UniProtKB-UniRule"/>
</dbReference>
<dbReference type="FunFam" id="3.20.20.540:FF:000001">
    <property type="entry name" value="Phosphomethylpyrimidine synthase"/>
    <property type="match status" value="1"/>
</dbReference>
<dbReference type="Gene3D" id="6.10.250.620">
    <property type="match status" value="1"/>
</dbReference>
<dbReference type="Gene3D" id="3.20.20.540">
    <property type="entry name" value="Radical SAM ThiC family, central domain"/>
    <property type="match status" value="1"/>
</dbReference>
<dbReference type="HAMAP" id="MF_00089">
    <property type="entry name" value="ThiC"/>
    <property type="match status" value="1"/>
</dbReference>
<dbReference type="InterPro" id="IPR037509">
    <property type="entry name" value="ThiC"/>
</dbReference>
<dbReference type="InterPro" id="IPR025747">
    <property type="entry name" value="ThiC-associated_dom"/>
</dbReference>
<dbReference type="InterPro" id="IPR038521">
    <property type="entry name" value="ThiC/Bza_core_dom"/>
</dbReference>
<dbReference type="InterPro" id="IPR002817">
    <property type="entry name" value="ThiC/BzaA/B"/>
</dbReference>
<dbReference type="NCBIfam" id="NF006763">
    <property type="entry name" value="PRK09284.1"/>
    <property type="match status" value="1"/>
</dbReference>
<dbReference type="NCBIfam" id="NF009895">
    <property type="entry name" value="PRK13352.1"/>
    <property type="match status" value="1"/>
</dbReference>
<dbReference type="NCBIfam" id="TIGR00190">
    <property type="entry name" value="thiC"/>
    <property type="match status" value="1"/>
</dbReference>
<dbReference type="PANTHER" id="PTHR30557:SF1">
    <property type="entry name" value="PHOSPHOMETHYLPYRIMIDINE SYNTHASE, CHLOROPLASTIC"/>
    <property type="match status" value="1"/>
</dbReference>
<dbReference type="PANTHER" id="PTHR30557">
    <property type="entry name" value="THIAMINE BIOSYNTHESIS PROTEIN THIC"/>
    <property type="match status" value="1"/>
</dbReference>
<dbReference type="Pfam" id="PF13667">
    <property type="entry name" value="ThiC-associated"/>
    <property type="match status" value="1"/>
</dbReference>
<dbReference type="Pfam" id="PF01964">
    <property type="entry name" value="ThiC_Rad_SAM"/>
    <property type="match status" value="1"/>
</dbReference>
<dbReference type="SFLD" id="SFLDF00407">
    <property type="entry name" value="phosphomethylpyrimidine_syntha"/>
    <property type="match status" value="1"/>
</dbReference>
<dbReference type="SFLD" id="SFLDG01114">
    <property type="entry name" value="phosphomethylpyrimidine_syntha"/>
    <property type="match status" value="1"/>
</dbReference>
<dbReference type="SFLD" id="SFLDS00113">
    <property type="entry name" value="Radical_SAM_Phosphomethylpyrim"/>
    <property type="match status" value="1"/>
</dbReference>